<evidence type="ECO:0000255" key="1">
    <source>
        <dbReference type="HAMAP-Rule" id="MF_00332"/>
    </source>
</evidence>
<evidence type="ECO:0000256" key="2">
    <source>
        <dbReference type="SAM" id="MobiDB-lite"/>
    </source>
</evidence>
<comment type="function">
    <text evidence="1">Acts as a chaperone.</text>
</comment>
<comment type="induction">
    <text evidence="1">By stress conditions e.g. heat shock.</text>
</comment>
<comment type="similarity">
    <text evidence="1">Belongs to the heat shock protein 70 family.</text>
</comment>
<sequence>MGRIIGIDLGTTNSCVAVLDGDKPRVIENAEGDRTTPSIIAYTNDGETLVGQSAKRQAVTNPENTLFAIKRLIGRRFQDKEVQRDIDIMPFKIVGADNGDAWVEAKGEKMAPPQVSAEVLKKMKKTAEDYLGEEVTGAVITVPAYFNDSQRQATKDAGRIAGLEVKRIINEPTAAALAYGMDKKQGDNVVAVYDLGGGTFDISIIEIDEVDGEHTFEVLATNGDTHLGGEDFDNRVINYLVEEFKKDQGIDLRKDPLAMQRLKEAGEKAKIELSSSQQTEVNLPYITADATGPKHLAIKLTRAKLESLVEDLVKNSLNPLKQALADSDLSVGDINDIILVGGQTRMPLVQKYVTEFFGKEPRKDVNPDEAVAVGAAIQGGVLSGDVKDVLLLDVTPLSLGIETMGGVMTALIEKNTTIPTKKSQTFSTAEDNQSAVTVHVLQGERKQSSGNKSLGQFNLEGIRPAARGVPQIEVTFDLDADGILHVSAKDKDTGKEQKITIKASSGLSDEEVEKMVADAEANKEADKKFEELIQARNQADGMVHATRKQLEEVGDALSAEDKAPIEEALSALETAVKGEDKAEIEAKTQELIQASSKLMEAAQAQQAAAGGAEGAEQQASSGQANDDVVDAEFEEVKDDDKK</sequence>
<dbReference type="EMBL" id="CP001103">
    <property type="protein sequence ID" value="AEA97553.1"/>
    <property type="molecule type" value="Genomic_DNA"/>
</dbReference>
<dbReference type="RefSeq" id="WP_012517895.1">
    <property type="nucleotide sequence ID" value="NC_011138.3"/>
</dbReference>
<dbReference type="SMR" id="B4S0U1"/>
<dbReference type="KEGG" id="amc:MADE_1007055"/>
<dbReference type="HOGENOM" id="CLU_005965_2_1_6"/>
<dbReference type="Proteomes" id="UP000001870">
    <property type="component" value="Chromosome"/>
</dbReference>
<dbReference type="GO" id="GO:0005524">
    <property type="term" value="F:ATP binding"/>
    <property type="evidence" value="ECO:0007669"/>
    <property type="project" value="UniProtKB-UniRule"/>
</dbReference>
<dbReference type="GO" id="GO:0140662">
    <property type="term" value="F:ATP-dependent protein folding chaperone"/>
    <property type="evidence" value="ECO:0007669"/>
    <property type="project" value="InterPro"/>
</dbReference>
<dbReference type="GO" id="GO:0051082">
    <property type="term" value="F:unfolded protein binding"/>
    <property type="evidence" value="ECO:0007669"/>
    <property type="project" value="InterPro"/>
</dbReference>
<dbReference type="CDD" id="cd10234">
    <property type="entry name" value="ASKHA_NBD_HSP70_DnaK-like"/>
    <property type="match status" value="1"/>
</dbReference>
<dbReference type="FunFam" id="2.60.34.10:FF:000014">
    <property type="entry name" value="Chaperone protein DnaK HSP70"/>
    <property type="match status" value="1"/>
</dbReference>
<dbReference type="FunFam" id="1.20.1270.10:FF:000001">
    <property type="entry name" value="Molecular chaperone DnaK"/>
    <property type="match status" value="1"/>
</dbReference>
<dbReference type="FunFam" id="3.30.420.40:FF:000004">
    <property type="entry name" value="Molecular chaperone DnaK"/>
    <property type="match status" value="1"/>
</dbReference>
<dbReference type="FunFam" id="3.90.640.10:FF:000003">
    <property type="entry name" value="Molecular chaperone DnaK"/>
    <property type="match status" value="1"/>
</dbReference>
<dbReference type="Gene3D" id="1.20.1270.10">
    <property type="match status" value="1"/>
</dbReference>
<dbReference type="Gene3D" id="3.30.420.40">
    <property type="match status" value="2"/>
</dbReference>
<dbReference type="Gene3D" id="3.90.640.10">
    <property type="entry name" value="Actin, Chain A, domain 4"/>
    <property type="match status" value="1"/>
</dbReference>
<dbReference type="Gene3D" id="2.60.34.10">
    <property type="entry name" value="Substrate Binding Domain Of DNAk, Chain A, domain 1"/>
    <property type="match status" value="1"/>
</dbReference>
<dbReference type="HAMAP" id="MF_00332">
    <property type="entry name" value="DnaK"/>
    <property type="match status" value="1"/>
</dbReference>
<dbReference type="InterPro" id="IPR043129">
    <property type="entry name" value="ATPase_NBD"/>
</dbReference>
<dbReference type="InterPro" id="IPR012725">
    <property type="entry name" value="Chaperone_DnaK"/>
</dbReference>
<dbReference type="InterPro" id="IPR018181">
    <property type="entry name" value="Heat_shock_70_CS"/>
</dbReference>
<dbReference type="InterPro" id="IPR029048">
    <property type="entry name" value="HSP70_C_sf"/>
</dbReference>
<dbReference type="InterPro" id="IPR029047">
    <property type="entry name" value="HSP70_peptide-bd_sf"/>
</dbReference>
<dbReference type="InterPro" id="IPR013126">
    <property type="entry name" value="Hsp_70_fam"/>
</dbReference>
<dbReference type="NCBIfam" id="NF001413">
    <property type="entry name" value="PRK00290.1"/>
    <property type="match status" value="1"/>
</dbReference>
<dbReference type="NCBIfam" id="NF003520">
    <property type="entry name" value="PRK05183.1"/>
    <property type="match status" value="1"/>
</dbReference>
<dbReference type="NCBIfam" id="TIGR02350">
    <property type="entry name" value="prok_dnaK"/>
    <property type="match status" value="1"/>
</dbReference>
<dbReference type="PANTHER" id="PTHR19375">
    <property type="entry name" value="HEAT SHOCK PROTEIN 70KDA"/>
    <property type="match status" value="1"/>
</dbReference>
<dbReference type="Pfam" id="PF00012">
    <property type="entry name" value="HSP70"/>
    <property type="match status" value="1"/>
</dbReference>
<dbReference type="PRINTS" id="PR00301">
    <property type="entry name" value="HEATSHOCK70"/>
</dbReference>
<dbReference type="SUPFAM" id="SSF53067">
    <property type="entry name" value="Actin-like ATPase domain"/>
    <property type="match status" value="2"/>
</dbReference>
<dbReference type="SUPFAM" id="SSF100934">
    <property type="entry name" value="Heat shock protein 70kD (HSP70), C-terminal subdomain"/>
    <property type="match status" value="1"/>
</dbReference>
<dbReference type="SUPFAM" id="SSF100920">
    <property type="entry name" value="Heat shock protein 70kD (HSP70), peptide-binding domain"/>
    <property type="match status" value="1"/>
</dbReference>
<dbReference type="PROSITE" id="PS00297">
    <property type="entry name" value="HSP70_1"/>
    <property type="match status" value="1"/>
</dbReference>
<dbReference type="PROSITE" id="PS00329">
    <property type="entry name" value="HSP70_2"/>
    <property type="match status" value="1"/>
</dbReference>
<dbReference type="PROSITE" id="PS01036">
    <property type="entry name" value="HSP70_3"/>
    <property type="match status" value="1"/>
</dbReference>
<feature type="chain" id="PRO_1000119661" description="Chaperone protein DnaK">
    <location>
        <begin position="1"/>
        <end position="642"/>
    </location>
</feature>
<feature type="region of interest" description="Disordered" evidence="2">
    <location>
        <begin position="605"/>
        <end position="642"/>
    </location>
</feature>
<feature type="compositionally biased region" description="Low complexity" evidence="2">
    <location>
        <begin position="605"/>
        <end position="624"/>
    </location>
</feature>
<feature type="compositionally biased region" description="Acidic residues" evidence="2">
    <location>
        <begin position="627"/>
        <end position="642"/>
    </location>
</feature>
<feature type="modified residue" description="Phosphothreonine; by autocatalysis" evidence="1">
    <location>
        <position position="199"/>
    </location>
</feature>
<gene>
    <name evidence="1" type="primary">dnaK</name>
    <name type="ordered locus">MADE_1007055</name>
</gene>
<keyword id="KW-0067">ATP-binding</keyword>
<keyword id="KW-0143">Chaperone</keyword>
<keyword id="KW-0547">Nucleotide-binding</keyword>
<keyword id="KW-0597">Phosphoprotein</keyword>
<keyword id="KW-0346">Stress response</keyword>
<organism>
    <name type="scientific">Alteromonas mediterranea (strain DSM 17117 / CIP 110805 / LMG 28347 / Deep ecotype)</name>
    <dbReference type="NCBI Taxonomy" id="1774373"/>
    <lineage>
        <taxon>Bacteria</taxon>
        <taxon>Pseudomonadati</taxon>
        <taxon>Pseudomonadota</taxon>
        <taxon>Gammaproteobacteria</taxon>
        <taxon>Alteromonadales</taxon>
        <taxon>Alteromonadaceae</taxon>
        <taxon>Alteromonas/Salinimonas group</taxon>
        <taxon>Alteromonas</taxon>
    </lineage>
</organism>
<proteinExistence type="inferred from homology"/>
<protein>
    <recommendedName>
        <fullName evidence="1">Chaperone protein DnaK</fullName>
    </recommendedName>
    <alternativeName>
        <fullName evidence="1">HSP70</fullName>
    </alternativeName>
    <alternativeName>
        <fullName evidence="1">Heat shock 70 kDa protein</fullName>
    </alternativeName>
    <alternativeName>
        <fullName evidence="1">Heat shock protein 70</fullName>
    </alternativeName>
</protein>
<name>DNAK_ALTMD</name>
<accession>B4S0U1</accession>
<accession>F2G6L6</accession>
<reference key="1">
    <citation type="journal article" date="2008" name="ISME J.">
        <title>Comparative genomics of two ecotypes of the marine planktonic copiotroph Alteromonas macleodii suggests alternative lifestyles associated with different kinds of particulate organic matter.</title>
        <authorList>
            <person name="Ivars-Martinez E."/>
            <person name="Martin-Cuadrado A.-B."/>
            <person name="D'Auria G."/>
            <person name="Mira A."/>
            <person name="Ferriera S."/>
            <person name="Johnson J."/>
            <person name="Friedman R."/>
            <person name="Rodriguez-Valera F."/>
        </authorList>
    </citation>
    <scope>NUCLEOTIDE SEQUENCE [LARGE SCALE GENOMIC DNA]</scope>
    <source>
        <strain>DSM 17117 / CIP 110805 / LMG 28347 / Deep ecotype</strain>
    </source>
</reference>